<comment type="function">
    <text evidence="1">Catalyzes the hydrolysis of the amide bond of N(2)-acetylated L-amino acids. Cleaves the acetyl group from N-acetyl-L-ornithine to form L-ornithine, an intermediate in L-arginine biosynthesis pathway, and a branchpoint in the synthesis of polyamines.</text>
</comment>
<comment type="catalytic activity">
    <reaction evidence="1">
        <text>N(2)-acetyl-L-ornithine + H2O = L-ornithine + acetate</text>
        <dbReference type="Rhea" id="RHEA:15941"/>
        <dbReference type="ChEBI" id="CHEBI:15377"/>
        <dbReference type="ChEBI" id="CHEBI:30089"/>
        <dbReference type="ChEBI" id="CHEBI:46911"/>
        <dbReference type="ChEBI" id="CHEBI:57805"/>
        <dbReference type="EC" id="3.5.1.16"/>
    </reaction>
</comment>
<comment type="cofactor">
    <cofactor evidence="1">
        <name>Zn(2+)</name>
        <dbReference type="ChEBI" id="CHEBI:29105"/>
    </cofactor>
    <cofactor evidence="1">
        <name>Co(2+)</name>
        <dbReference type="ChEBI" id="CHEBI:48828"/>
    </cofactor>
    <text evidence="1">Binds 2 Zn(2+) or Co(2+) ions per subunit.</text>
</comment>
<comment type="cofactor">
    <cofactor evidence="1">
        <name>glutathione</name>
        <dbReference type="ChEBI" id="CHEBI:57925"/>
    </cofactor>
</comment>
<comment type="pathway">
    <text evidence="1">Amino-acid biosynthesis; L-arginine biosynthesis; L-ornithine from N(2)-acetyl-L-ornithine (linear): step 1/1.</text>
</comment>
<comment type="subunit">
    <text evidence="1">Homodimer.</text>
</comment>
<comment type="subcellular location">
    <subcellularLocation>
        <location evidence="1">Cytoplasm</location>
    </subcellularLocation>
</comment>
<comment type="similarity">
    <text evidence="1">Belongs to the peptidase M20A family. ArgE subfamily.</text>
</comment>
<name>ARGE_VIBC3</name>
<gene>
    <name evidence="1" type="primary">argE</name>
    <name type="ordered locus">VC0395_A2221</name>
    <name type="ordered locus">VC395_2758</name>
</gene>
<protein>
    <recommendedName>
        <fullName evidence="1">Acetylornithine deacetylase</fullName>
        <shortName evidence="1">AO</shortName>
        <shortName evidence="1">Acetylornithinase</shortName>
        <ecNumber evidence="1">3.5.1.16</ecNumber>
    </recommendedName>
    <alternativeName>
        <fullName evidence="1">N-acetylornithinase</fullName>
        <shortName evidence="1">NAO</shortName>
    </alternativeName>
</protein>
<proteinExistence type="inferred from homology"/>
<evidence type="ECO:0000255" key="1">
    <source>
        <dbReference type="HAMAP-Rule" id="MF_01108"/>
    </source>
</evidence>
<reference key="1">
    <citation type="submission" date="2007-03" db="EMBL/GenBank/DDBJ databases">
        <authorList>
            <person name="Heidelberg J."/>
        </authorList>
    </citation>
    <scope>NUCLEOTIDE SEQUENCE [LARGE SCALE GENOMIC DNA]</scope>
    <source>
        <strain>ATCC 39541 / Classical Ogawa 395 / O395</strain>
    </source>
</reference>
<reference key="2">
    <citation type="journal article" date="2008" name="PLoS ONE">
        <title>A recalibrated molecular clock and independent origins for the cholera pandemic clones.</title>
        <authorList>
            <person name="Feng L."/>
            <person name="Reeves P.R."/>
            <person name="Lan R."/>
            <person name="Ren Y."/>
            <person name="Gao C."/>
            <person name="Zhou Z."/>
            <person name="Ren Y."/>
            <person name="Cheng J."/>
            <person name="Wang W."/>
            <person name="Wang J."/>
            <person name="Qian W."/>
            <person name="Li D."/>
            <person name="Wang L."/>
        </authorList>
    </citation>
    <scope>NUCLEOTIDE SEQUENCE [LARGE SCALE GENOMIC DNA]</scope>
    <source>
        <strain>ATCC 39541 / Classical Ogawa 395 / O395</strain>
    </source>
</reference>
<organism>
    <name type="scientific">Vibrio cholerae serotype O1 (strain ATCC 39541 / Classical Ogawa 395 / O395)</name>
    <dbReference type="NCBI Taxonomy" id="345073"/>
    <lineage>
        <taxon>Bacteria</taxon>
        <taxon>Pseudomonadati</taxon>
        <taxon>Pseudomonadota</taxon>
        <taxon>Gammaproteobacteria</taxon>
        <taxon>Vibrionales</taxon>
        <taxon>Vibrionaceae</taxon>
        <taxon>Vibrio</taxon>
    </lineage>
</organism>
<accession>A5F4Z7</accession>
<accession>C3LXP3</accession>
<keyword id="KW-0028">Amino-acid biosynthesis</keyword>
<keyword id="KW-0055">Arginine biosynthesis</keyword>
<keyword id="KW-0170">Cobalt</keyword>
<keyword id="KW-0963">Cytoplasm</keyword>
<keyword id="KW-0378">Hydrolase</keyword>
<keyword id="KW-0479">Metal-binding</keyword>
<keyword id="KW-0862">Zinc</keyword>
<sequence length="378" mass="41964">MPLPSFLEVYEGLISTSSISSTDARWDEGNEQVIAKLADWLSALGFSIQIEQVAPNKQNLIAKLGSGEGGLLLAGHSDTVPFDEGRWNYNPHALTQVNNRFYGLGTADMKGFFAFIYEAVKNVDWSKQTKPLYVLATCDEETTMLGARHFTENAPFKPDYCIIGEPTSLVPIRAHKGHVANAIRVTGKSGHSSNPALGVNAIEIMHEVLFALMQLRDRLIKEYHHPGFEIPTPTLNLGHIHGGDSPNRICGCCELHYDVRPLPGISLDGLDNLMHDALREVQQKWPGRIELVPLHDPIPGYECAHDHPFIHGISEICEQEAQTVNYCTEAPFLQQVCPTLVLGPGSIDQAHQPDEFLAFEFIDPTVRVLSRAMQKYCF</sequence>
<feature type="chain" id="PRO_1000073029" description="Acetylornithine deacetylase">
    <location>
        <begin position="1"/>
        <end position="378"/>
    </location>
</feature>
<feature type="active site" evidence="1">
    <location>
        <position position="78"/>
    </location>
</feature>
<feature type="active site" evidence="1">
    <location>
        <position position="140"/>
    </location>
</feature>
<feature type="binding site" evidence="1">
    <location>
        <position position="76"/>
    </location>
    <ligand>
        <name>Zn(2+)</name>
        <dbReference type="ChEBI" id="CHEBI:29105"/>
        <label>1</label>
    </ligand>
</feature>
<feature type="binding site" evidence="1">
    <location>
        <position position="108"/>
    </location>
    <ligand>
        <name>Zn(2+)</name>
        <dbReference type="ChEBI" id="CHEBI:29105"/>
        <label>1</label>
    </ligand>
</feature>
<feature type="binding site" evidence="1">
    <location>
        <position position="108"/>
    </location>
    <ligand>
        <name>Zn(2+)</name>
        <dbReference type="ChEBI" id="CHEBI:29105"/>
        <label>2</label>
    </ligand>
</feature>
<feature type="binding site" evidence="1">
    <location>
        <position position="141"/>
    </location>
    <ligand>
        <name>Zn(2+)</name>
        <dbReference type="ChEBI" id="CHEBI:29105"/>
        <label>2</label>
    </ligand>
</feature>
<feature type="binding site" evidence="1">
    <location>
        <position position="165"/>
    </location>
    <ligand>
        <name>Zn(2+)</name>
        <dbReference type="ChEBI" id="CHEBI:29105"/>
        <label>1</label>
    </ligand>
</feature>
<feature type="binding site" evidence="1">
    <location>
        <position position="351"/>
    </location>
    <ligand>
        <name>Zn(2+)</name>
        <dbReference type="ChEBI" id="CHEBI:29105"/>
        <label>2</label>
    </ligand>
</feature>
<dbReference type="EC" id="3.5.1.16" evidence="1"/>
<dbReference type="EMBL" id="CP000627">
    <property type="protein sequence ID" value="ABQ20373.1"/>
    <property type="molecule type" value="Genomic_DNA"/>
</dbReference>
<dbReference type="EMBL" id="CP001235">
    <property type="protein sequence ID" value="ACP10743.1"/>
    <property type="molecule type" value="Genomic_DNA"/>
</dbReference>
<dbReference type="RefSeq" id="WP_001130865.1">
    <property type="nucleotide sequence ID" value="NZ_JAACZH010000007.1"/>
</dbReference>
<dbReference type="SMR" id="A5F4Z7"/>
<dbReference type="KEGG" id="vco:VC0395_A2221"/>
<dbReference type="KEGG" id="vcr:VC395_2758"/>
<dbReference type="PATRIC" id="fig|345073.21.peg.2657"/>
<dbReference type="eggNOG" id="COG0624">
    <property type="taxonomic scope" value="Bacteria"/>
</dbReference>
<dbReference type="HOGENOM" id="CLU_021802_2_4_6"/>
<dbReference type="OrthoDB" id="3665926at2"/>
<dbReference type="UniPathway" id="UPA00068">
    <property type="reaction ID" value="UER00110"/>
</dbReference>
<dbReference type="Proteomes" id="UP000000249">
    <property type="component" value="Chromosome 2"/>
</dbReference>
<dbReference type="GO" id="GO:0005737">
    <property type="term" value="C:cytoplasm"/>
    <property type="evidence" value="ECO:0007669"/>
    <property type="project" value="UniProtKB-SubCell"/>
</dbReference>
<dbReference type="GO" id="GO:0008777">
    <property type="term" value="F:acetylornithine deacetylase activity"/>
    <property type="evidence" value="ECO:0007669"/>
    <property type="project" value="UniProtKB-UniRule"/>
</dbReference>
<dbReference type="GO" id="GO:0008270">
    <property type="term" value="F:zinc ion binding"/>
    <property type="evidence" value="ECO:0007669"/>
    <property type="project" value="UniProtKB-UniRule"/>
</dbReference>
<dbReference type="GO" id="GO:0006526">
    <property type="term" value="P:L-arginine biosynthetic process"/>
    <property type="evidence" value="ECO:0007669"/>
    <property type="project" value="UniProtKB-UniRule"/>
</dbReference>
<dbReference type="CDD" id="cd03894">
    <property type="entry name" value="M20_ArgE"/>
    <property type="match status" value="1"/>
</dbReference>
<dbReference type="FunFam" id="3.30.70.360:FF:000003">
    <property type="entry name" value="Acetylornithine deacetylase"/>
    <property type="match status" value="1"/>
</dbReference>
<dbReference type="Gene3D" id="3.30.70.360">
    <property type="match status" value="1"/>
</dbReference>
<dbReference type="Gene3D" id="3.40.630.10">
    <property type="entry name" value="Zn peptidases"/>
    <property type="match status" value="1"/>
</dbReference>
<dbReference type="HAMAP" id="MF_01108">
    <property type="entry name" value="ArgE"/>
    <property type="match status" value="1"/>
</dbReference>
<dbReference type="InterPro" id="IPR010169">
    <property type="entry name" value="AcOrn-deacetyl"/>
</dbReference>
<dbReference type="InterPro" id="IPR001261">
    <property type="entry name" value="ArgE/DapE_CS"/>
</dbReference>
<dbReference type="InterPro" id="IPR036264">
    <property type="entry name" value="Bact_exopeptidase_dim_dom"/>
</dbReference>
<dbReference type="InterPro" id="IPR002933">
    <property type="entry name" value="Peptidase_M20"/>
</dbReference>
<dbReference type="InterPro" id="IPR011650">
    <property type="entry name" value="Peptidase_M20_dimer"/>
</dbReference>
<dbReference type="InterPro" id="IPR050072">
    <property type="entry name" value="Peptidase_M20A"/>
</dbReference>
<dbReference type="NCBIfam" id="TIGR01892">
    <property type="entry name" value="AcOrn-deacetyl"/>
    <property type="match status" value="1"/>
</dbReference>
<dbReference type="NCBIfam" id="NF003474">
    <property type="entry name" value="PRK05111.1"/>
    <property type="match status" value="1"/>
</dbReference>
<dbReference type="PANTHER" id="PTHR43808">
    <property type="entry name" value="ACETYLORNITHINE DEACETYLASE"/>
    <property type="match status" value="1"/>
</dbReference>
<dbReference type="PANTHER" id="PTHR43808:SF1">
    <property type="entry name" value="ACETYLORNITHINE DEACETYLASE"/>
    <property type="match status" value="1"/>
</dbReference>
<dbReference type="Pfam" id="PF07687">
    <property type="entry name" value="M20_dimer"/>
    <property type="match status" value="1"/>
</dbReference>
<dbReference type="Pfam" id="PF01546">
    <property type="entry name" value="Peptidase_M20"/>
    <property type="match status" value="1"/>
</dbReference>
<dbReference type="SUPFAM" id="SSF55031">
    <property type="entry name" value="Bacterial exopeptidase dimerisation domain"/>
    <property type="match status" value="1"/>
</dbReference>
<dbReference type="SUPFAM" id="SSF53187">
    <property type="entry name" value="Zn-dependent exopeptidases"/>
    <property type="match status" value="1"/>
</dbReference>
<dbReference type="PROSITE" id="PS00758">
    <property type="entry name" value="ARGE_DAPE_CPG2_1"/>
    <property type="match status" value="1"/>
</dbReference>
<dbReference type="PROSITE" id="PS00759">
    <property type="entry name" value="ARGE_DAPE_CPG2_2"/>
    <property type="match status" value="1"/>
</dbReference>